<feature type="chain" id="PRO_0000201153" description="PhoH-like protein">
    <location>
        <begin position="1"/>
        <end position="346"/>
    </location>
</feature>
<feature type="binding site" evidence="1">
    <location>
        <begin position="142"/>
        <end position="149"/>
    </location>
    <ligand>
        <name>ATP</name>
        <dbReference type="ChEBI" id="CHEBI:30616"/>
    </ligand>
</feature>
<accession>P0A9K4</accession>
<accession>P77349</accession>
<protein>
    <recommendedName>
        <fullName>PhoH-like protein</fullName>
    </recommendedName>
</protein>
<sequence>MNIDTREITLEPADNARLLSLCGPFDDNIKQLERRLGIEINRRDNHFKLTGRPICVTAAADILRSLYVDTAPMRGQIQDIEPEQIHLAIKEARVLEQSAESVPEYGKAVNIKTKRGVIKPRTPNQAQYIANILDHDITFGVGPAGTGKTYLAVAAAVDALERQEIRRILLTRPAVEAGEKLGFLPGDLSQKVDPYLRPLYDALFEMLGFEKVEKLIERNVIEVAPLAYMRGRTLNDAFIILDESQNTTIEQMKMFLTRIGFNSKAVITGDVTQIDLPRNTKSGLRHAIEVLADVEEISFNFFHSEDVVRHPVVARIVNAYEAWEEAEQKRKAALAAERKREEQEQK</sequence>
<name>PHOL_ECOL6</name>
<dbReference type="EMBL" id="AE014075">
    <property type="protein sequence ID" value="AAN79218.1"/>
    <property type="status" value="ALT_INIT"/>
    <property type="molecule type" value="Genomic_DNA"/>
</dbReference>
<dbReference type="RefSeq" id="WP_001018040.1">
    <property type="nucleotide sequence ID" value="NZ_CP051263.1"/>
</dbReference>
<dbReference type="SMR" id="P0A9K4"/>
<dbReference type="STRING" id="199310.c0745"/>
<dbReference type="KEGG" id="ecc:c0745"/>
<dbReference type="eggNOG" id="COG1702">
    <property type="taxonomic scope" value="Bacteria"/>
</dbReference>
<dbReference type="HOGENOM" id="CLU_051654_0_0_6"/>
<dbReference type="Proteomes" id="UP000001410">
    <property type="component" value="Chromosome"/>
</dbReference>
<dbReference type="GO" id="GO:0005829">
    <property type="term" value="C:cytosol"/>
    <property type="evidence" value="ECO:0007669"/>
    <property type="project" value="TreeGrafter"/>
</dbReference>
<dbReference type="GO" id="GO:0005524">
    <property type="term" value="F:ATP binding"/>
    <property type="evidence" value="ECO:0007669"/>
    <property type="project" value="UniProtKB-KW"/>
</dbReference>
<dbReference type="FunFam" id="3.40.50.300:FF:000013">
    <property type="entry name" value="PhoH family ATPase"/>
    <property type="match status" value="1"/>
</dbReference>
<dbReference type="Gene3D" id="3.40.50.300">
    <property type="entry name" value="P-loop containing nucleotide triphosphate hydrolases"/>
    <property type="match status" value="1"/>
</dbReference>
<dbReference type="InterPro" id="IPR027417">
    <property type="entry name" value="P-loop_NTPase"/>
</dbReference>
<dbReference type="InterPro" id="IPR003714">
    <property type="entry name" value="PhoH"/>
</dbReference>
<dbReference type="InterPro" id="IPR051451">
    <property type="entry name" value="PhoH2-like"/>
</dbReference>
<dbReference type="PANTHER" id="PTHR30473:SF1">
    <property type="entry name" value="PHOH-LIKE PROTEIN"/>
    <property type="match status" value="1"/>
</dbReference>
<dbReference type="PANTHER" id="PTHR30473">
    <property type="entry name" value="PROTEIN PHOH"/>
    <property type="match status" value="1"/>
</dbReference>
<dbReference type="Pfam" id="PF02562">
    <property type="entry name" value="PhoH"/>
    <property type="match status" value="1"/>
</dbReference>
<dbReference type="SUPFAM" id="SSF52540">
    <property type="entry name" value="P-loop containing nucleoside triphosphate hydrolases"/>
    <property type="match status" value="1"/>
</dbReference>
<reference key="1">
    <citation type="journal article" date="2002" name="Proc. Natl. Acad. Sci. U.S.A.">
        <title>Extensive mosaic structure revealed by the complete genome sequence of uropathogenic Escherichia coli.</title>
        <authorList>
            <person name="Welch R.A."/>
            <person name="Burland V."/>
            <person name="Plunkett G. III"/>
            <person name="Redford P."/>
            <person name="Roesch P."/>
            <person name="Rasko D."/>
            <person name="Buckles E.L."/>
            <person name="Liou S.-R."/>
            <person name="Boutin A."/>
            <person name="Hackett J."/>
            <person name="Stroud D."/>
            <person name="Mayhew G.F."/>
            <person name="Rose D.J."/>
            <person name="Zhou S."/>
            <person name="Schwartz D.C."/>
            <person name="Perna N.T."/>
            <person name="Mobley H.L.T."/>
            <person name="Donnenberg M.S."/>
            <person name="Blattner F.R."/>
        </authorList>
    </citation>
    <scope>NUCLEOTIDE SEQUENCE [LARGE SCALE GENOMIC DNA]</scope>
    <source>
        <strain>CFT073 / ATCC 700928 / UPEC</strain>
    </source>
</reference>
<organism>
    <name type="scientific">Escherichia coli O6:H1 (strain CFT073 / ATCC 700928 / UPEC)</name>
    <dbReference type="NCBI Taxonomy" id="199310"/>
    <lineage>
        <taxon>Bacteria</taxon>
        <taxon>Pseudomonadati</taxon>
        <taxon>Pseudomonadota</taxon>
        <taxon>Gammaproteobacteria</taxon>
        <taxon>Enterobacterales</taxon>
        <taxon>Enterobacteriaceae</taxon>
        <taxon>Escherichia</taxon>
    </lineage>
</organism>
<evidence type="ECO:0000255" key="1"/>
<evidence type="ECO:0000305" key="2"/>
<proteinExistence type="inferred from homology"/>
<comment type="subcellular location">
    <subcellularLocation>
        <location evidence="2">Cytoplasm</location>
    </subcellularLocation>
</comment>
<comment type="similarity">
    <text evidence="2">Belongs to the PhoH family.</text>
</comment>
<comment type="sequence caution" evidence="2">
    <conflict type="erroneous initiation">
        <sequence resource="EMBL-CDS" id="AAN79218"/>
    </conflict>
</comment>
<gene>
    <name type="primary">ybeZ</name>
    <name type="ordered locus">c0745</name>
</gene>
<keyword id="KW-0067">ATP-binding</keyword>
<keyword id="KW-0963">Cytoplasm</keyword>
<keyword id="KW-0547">Nucleotide-binding</keyword>
<keyword id="KW-1185">Reference proteome</keyword>